<evidence type="ECO:0000250" key="1">
    <source>
        <dbReference type="UniProtKB" id="O09161"/>
    </source>
</evidence>
<evidence type="ECO:0000256" key="2">
    <source>
        <dbReference type="SAM" id="MobiDB-lite"/>
    </source>
</evidence>
<evidence type="ECO:0000269" key="3">
    <source>
    </source>
</evidence>
<evidence type="ECO:0000269" key="4">
    <source>
    </source>
</evidence>
<evidence type="ECO:0000269" key="5">
    <source>
    </source>
</evidence>
<evidence type="ECO:0000305" key="6"/>
<accession>P19204</accession>
<comment type="function">
    <text evidence="1">Calsequestrin is a high-capacity, moderate affinity, calcium-binding protein and thus acts as an internal calcium store in muscle. Calcium ions are bound by clusters of acidic residues at the protein surface, especially at the interface between subunits. Can bind around 60 Ca(2+) ions. Regulates the release of lumenal Ca(2+) via the calcium release channel RYR2; this plays an important role in triggering muscle contraction. Plays a role in excitation-contraction coupling in the heart and in regulating the rate of heart beats.</text>
</comment>
<comment type="subcellular location">
    <subcellularLocation>
        <location evidence="3">Sarcoplasmic reticulum lumen</location>
    </subcellularLocation>
    <text evidence="3">This isoform of calsequestrin occurs in the sarcoplasmic reticulum's terminal cisternae luminal spaces of cardiac and slow skeletal muscle cells.</text>
</comment>
<comment type="tissue specificity">
    <text evidence="5">Skeletal and heart muscle.</text>
</comment>
<comment type="similarity">
    <text evidence="6">Belongs to the calsequestrin family.</text>
</comment>
<comment type="caution">
    <text evidence="6">Was initially identified as a laminin-binding protein (PubMed:3417768), but later studies indicate that this is highly unlikely (PubMed:1825466, PubMed:2302244).</text>
</comment>
<reference key="1">
    <citation type="journal article" date="1988" name="J. Cell Biol.">
        <title>Amino acid sequence and distribution of mRNA encoding a major skeletal muscle laminin binding protein: an extracellular matrix-associated protein with an unusual COOH-terminal polyaspartate domain.</title>
        <authorList>
            <person name="Clegg D.O."/>
            <person name="Helder J.C."/>
            <person name="Hann B.C."/>
            <person name="Hall D.E."/>
            <person name="Reichardt L.F."/>
        </authorList>
    </citation>
    <scope>NUCLEOTIDE SEQUENCE [MRNA]</scope>
    <scope>TISSUE SPECIFICITY</scope>
    <source>
        <strain>White leghorn</strain>
    </source>
</reference>
<reference key="2">
    <citation type="journal article" date="1990" name="Biochem. Biophys. Res. Commun.">
        <title>Amino acid sequence of chicken calsequestrin deduced from cDNA: comparison of calsequestrin and aspartactin.</title>
        <authorList>
            <person name="Yazaki P.J."/>
            <person name="Salvatori S."/>
            <person name="Dahms A.S."/>
        </authorList>
    </citation>
    <scope>NUCLEOTIDE SEQUENCE [MRNA] OF 20-406</scope>
    <scope>PARTIAL PROTEIN SEQUENCE</scope>
</reference>
<reference key="3">
    <citation type="journal article" date="1990" name="Biochem. Biophys. Res. Commun.">
        <authorList>
            <person name="Yazaki P.J."/>
            <person name="Salvatori S."/>
            <person name="Dahms A.S."/>
        </authorList>
    </citation>
    <scope>ERRATUM OF PUBMED:2390076</scope>
</reference>
<reference key="4">
    <citation type="journal article" date="1988" name="J. Cell Biol.">
        <title>Isolation and characterization of a laminin-binding protein from rat and chick muscle.</title>
        <authorList>
            <person name="Hall D.E."/>
            <person name="Frazer K.A."/>
            <person name="Hann B.C."/>
            <person name="Reichardt L.F."/>
        </authorList>
    </citation>
    <scope>PROTEIN SEQUENCE OF 20-39</scope>
    <source>
        <strain>White leghorn</strain>
        <tissue>Skeletal muscle</tissue>
    </source>
</reference>
<reference key="5">
    <citation type="journal article" date="1990" name="Biochem. Biophys. Res. Commun.">
        <title>Calsequestrin, an intracellular calcium-binding protein of skeletal muscle sarcoplasmic reticulum, is homologous to aspartactin, a putative laminin-binding protein of the extracellular matrix.</title>
        <authorList>
            <person name="Yazaki P.J."/>
            <person name="Salvatori S."/>
            <person name="Sabbadini R.A."/>
            <person name="Dahms A.S."/>
        </authorList>
    </citation>
    <scope>PROTEIN SEQUENCE OF 20-39</scope>
    <scope>SUBCELLULAR LOCATION</scope>
    <source>
        <strain>New Hampshire</strain>
    </source>
</reference>
<reference key="6">
    <citation type="journal article" date="1991" name="Biochem. Biophys. Res. Commun.">
        <title>Evidence against a laminin receptor role for calsequestrin.</title>
        <authorList>
            <person name="Choi E.S."/>
            <person name="Sullivan P.D."/>
            <person name="Clegg D.O."/>
        </authorList>
    </citation>
    <scope>CAUTION</scope>
    <scope>LACK OF LAMININ BINDING</scope>
</reference>
<feature type="signal peptide" evidence="3 4">
    <location>
        <begin position="1"/>
        <end position="19"/>
    </location>
</feature>
<feature type="chain" id="PRO_0000004215" description="Calsequestrin-2">
    <location>
        <begin position="20"/>
        <end position="406"/>
    </location>
</feature>
<feature type="region of interest" description="Disordered" evidence="2">
    <location>
        <begin position="365"/>
        <end position="406"/>
    </location>
</feature>
<feature type="compositionally biased region" description="Acidic residues" evidence="2">
    <location>
        <begin position="373"/>
        <end position="406"/>
    </location>
</feature>
<feature type="glycosylation site" description="N-linked (GlcNAc...) asparagine" evidence="6">
    <location>
        <position position="335"/>
    </location>
</feature>
<feature type="sequence conflict" description="In Ref. 2; AAA48674." evidence="6" ref="2">
    <original>V</original>
    <variation>I</variation>
    <location>
        <position position="148"/>
    </location>
</feature>
<proteinExistence type="evidence at protein level"/>
<name>CASQ2_CHICK</name>
<keyword id="KW-0106">Calcium</keyword>
<keyword id="KW-0903">Direct protein sequencing</keyword>
<keyword id="KW-0325">Glycoprotein</keyword>
<keyword id="KW-0514">Muscle protein</keyword>
<keyword id="KW-1185">Reference proteome</keyword>
<keyword id="KW-0703">Sarcoplasmic reticulum</keyword>
<keyword id="KW-0732">Signal</keyword>
<gene>
    <name type="primary">CASQ2</name>
</gene>
<protein>
    <recommendedName>
        <fullName>Calsequestrin-2</fullName>
    </recommendedName>
    <alternativeName>
        <fullName>Laminin-binding protein</fullName>
    </alternativeName>
</protein>
<organism>
    <name type="scientific">Gallus gallus</name>
    <name type="common">Chicken</name>
    <dbReference type="NCBI Taxonomy" id="9031"/>
    <lineage>
        <taxon>Eukaryota</taxon>
        <taxon>Metazoa</taxon>
        <taxon>Chordata</taxon>
        <taxon>Craniata</taxon>
        <taxon>Vertebrata</taxon>
        <taxon>Euteleostomi</taxon>
        <taxon>Archelosauria</taxon>
        <taxon>Archosauria</taxon>
        <taxon>Dinosauria</taxon>
        <taxon>Saurischia</taxon>
        <taxon>Theropoda</taxon>
        <taxon>Coelurosauria</taxon>
        <taxon>Aves</taxon>
        <taxon>Neognathae</taxon>
        <taxon>Galloanserae</taxon>
        <taxon>Galliformes</taxon>
        <taxon>Phasianidae</taxon>
        <taxon>Phasianinae</taxon>
        <taxon>Gallus</taxon>
    </lineage>
</organism>
<sequence length="406" mass="47151">MKATCWILAGFCLLFCCKAEEGLNFPTYDGKDRVIDLNEKNYKHALKKYDMLCLLFHEPVSSDRVSQKQFQMTEMVLELAAQVLEPRSIGFGMVDSKKDAKLAKKLGLVEEGSLYVFKEERLIEFDGELATDVLVEFLLDLLEDPVEVINSKLELQAFDQIDDEIKLIGYFKGEDSEHYKAFEEAAEHFQPYVKFFATFDKGVAKKLGLKMNEVDFYEPFMDEPVHIPDKPYTEEELVEFVKEHKRATLRKLRPEDMFETWEDDMEGIHIVAFAEEDDPDGFEFLEILKQVARDNTDNPDLSIVWIDPDDFPLLITYWEKTFKIDLFRPQIGIVNVTDADSVWMEIRDDDDLPTAEELEDWIEDVLSGKINTEDDDDDDDDDDDDDDDDDDDDDDDDDDDDDDDDD</sequence>
<dbReference type="EMBL" id="Y00789">
    <property type="protein sequence ID" value="CAA68743.1"/>
    <property type="molecule type" value="mRNA"/>
</dbReference>
<dbReference type="EMBL" id="M58048">
    <property type="protein sequence ID" value="AAA48674.1"/>
    <property type="molecule type" value="mRNA"/>
</dbReference>
<dbReference type="PIR" id="A31050">
    <property type="entry name" value="A31050"/>
</dbReference>
<dbReference type="RefSeq" id="NP_989857.1">
    <property type="nucleotide sequence ID" value="NM_204526.1"/>
</dbReference>
<dbReference type="SMR" id="P19204"/>
<dbReference type="FunCoup" id="P19204">
    <property type="interactions" value="10"/>
</dbReference>
<dbReference type="STRING" id="9031.ENSGALP00000036165"/>
<dbReference type="GlyCosmos" id="P19204">
    <property type="glycosylation" value="1 site, No reported glycans"/>
</dbReference>
<dbReference type="GlyGen" id="P19204">
    <property type="glycosylation" value="1 site"/>
</dbReference>
<dbReference type="PaxDb" id="9031-ENSGALP00000036165"/>
<dbReference type="GeneID" id="395198"/>
<dbReference type="KEGG" id="gga:395198"/>
<dbReference type="CTD" id="845"/>
<dbReference type="VEuPathDB" id="HostDB:geneid_395198"/>
<dbReference type="eggNOG" id="ENOG502QU4Q">
    <property type="taxonomic scope" value="Eukaryota"/>
</dbReference>
<dbReference type="InParanoid" id="P19204"/>
<dbReference type="OrthoDB" id="10038131at2759"/>
<dbReference type="PhylomeDB" id="P19204"/>
<dbReference type="PRO" id="PR:P19204"/>
<dbReference type="Proteomes" id="UP000000539">
    <property type="component" value="Unassembled WGS sequence"/>
</dbReference>
<dbReference type="GO" id="GO:0033018">
    <property type="term" value="C:sarcoplasmic reticulum lumen"/>
    <property type="evidence" value="ECO:0000318"/>
    <property type="project" value="GO_Central"/>
</dbReference>
<dbReference type="GO" id="GO:0014802">
    <property type="term" value="C:terminal cisterna"/>
    <property type="evidence" value="ECO:0000314"/>
    <property type="project" value="AgBase"/>
</dbReference>
<dbReference type="GO" id="GO:0030018">
    <property type="term" value="C:Z disc"/>
    <property type="evidence" value="ECO:0000318"/>
    <property type="project" value="GO_Central"/>
</dbReference>
<dbReference type="GO" id="GO:0005509">
    <property type="term" value="F:calcium ion binding"/>
    <property type="evidence" value="ECO:0000318"/>
    <property type="project" value="GO_Central"/>
</dbReference>
<dbReference type="GO" id="GO:0010881">
    <property type="term" value="P:regulation of cardiac muscle contraction by regulation of the release of sequestered calcium ion"/>
    <property type="evidence" value="ECO:0000318"/>
    <property type="project" value="GO_Central"/>
</dbReference>
<dbReference type="CDD" id="cd03074">
    <property type="entry name" value="PDI_b'_Calsequestrin_C"/>
    <property type="match status" value="1"/>
</dbReference>
<dbReference type="CDD" id="cd03066">
    <property type="entry name" value="PDI_b_Calsequestrin_middle"/>
    <property type="match status" value="1"/>
</dbReference>
<dbReference type="CDD" id="cd03065">
    <property type="entry name" value="PDI_b_Calsequestrin_N"/>
    <property type="match status" value="1"/>
</dbReference>
<dbReference type="FunFam" id="3.40.30.10:FF:000031">
    <property type="entry name" value="Calsequestrin"/>
    <property type="match status" value="1"/>
</dbReference>
<dbReference type="FunFam" id="3.40.30.10:FF:000033">
    <property type="entry name" value="Calsequestrin"/>
    <property type="match status" value="1"/>
</dbReference>
<dbReference type="FunFam" id="3.40.30.10:FF:000047">
    <property type="entry name" value="Calsequestrin"/>
    <property type="match status" value="1"/>
</dbReference>
<dbReference type="Gene3D" id="3.40.30.10">
    <property type="entry name" value="Glutaredoxin"/>
    <property type="match status" value="3"/>
</dbReference>
<dbReference type="InterPro" id="IPR001393">
    <property type="entry name" value="Calsequestrin"/>
</dbReference>
<dbReference type="InterPro" id="IPR041860">
    <property type="entry name" value="Calsequestrin_C"/>
</dbReference>
<dbReference type="InterPro" id="IPR018233">
    <property type="entry name" value="Calsequestrin_CS"/>
</dbReference>
<dbReference type="InterPro" id="IPR041858">
    <property type="entry name" value="Calsequestrin_middle_dom"/>
</dbReference>
<dbReference type="InterPro" id="IPR041859">
    <property type="entry name" value="Calsequestrin_N"/>
</dbReference>
<dbReference type="InterPro" id="IPR036249">
    <property type="entry name" value="Thioredoxin-like_sf"/>
</dbReference>
<dbReference type="PANTHER" id="PTHR10033">
    <property type="entry name" value="CALSEQUESTRIN"/>
    <property type="match status" value="1"/>
</dbReference>
<dbReference type="PANTHER" id="PTHR10033:SF15">
    <property type="entry name" value="CALSEQUESTRIN-2"/>
    <property type="match status" value="1"/>
</dbReference>
<dbReference type="Pfam" id="PF01216">
    <property type="entry name" value="Calsequestrin"/>
    <property type="match status" value="1"/>
</dbReference>
<dbReference type="PRINTS" id="PR00312">
    <property type="entry name" value="CALSEQUESTRN"/>
</dbReference>
<dbReference type="SUPFAM" id="SSF52833">
    <property type="entry name" value="Thioredoxin-like"/>
    <property type="match status" value="3"/>
</dbReference>
<dbReference type="PROSITE" id="PS00863">
    <property type="entry name" value="CALSEQUESTRIN_1"/>
    <property type="match status" value="1"/>
</dbReference>
<dbReference type="PROSITE" id="PS00864">
    <property type="entry name" value="CALSEQUESTRIN_2"/>
    <property type="match status" value="1"/>
</dbReference>